<organism>
    <name type="scientific">Strongylocentrotus purpuratus</name>
    <name type="common">Purple sea urchin</name>
    <dbReference type="NCBI Taxonomy" id="7668"/>
    <lineage>
        <taxon>Eukaryota</taxon>
        <taxon>Metazoa</taxon>
        <taxon>Echinodermata</taxon>
        <taxon>Eleutherozoa</taxon>
        <taxon>Echinozoa</taxon>
        <taxon>Echinoidea</taxon>
        <taxon>Euechinoidea</taxon>
        <taxon>Echinacea</taxon>
        <taxon>Camarodonta</taxon>
        <taxon>Echinidea</taxon>
        <taxon>Strongylocentrotidae</taxon>
        <taxon>Strongylocentrotus</taxon>
    </lineage>
</organism>
<sequence>MCDDDVAALVIDNGSGMVKAGFAGDDAPRAVFPSIVGRPRHQGVMVGMGQKDSYVGDEAQSKRGILTLKYPMEHGIVTNWDDMEKIWHHTFYNELRVAPEEHPVLLTEAPLNPKANREKMTQIMFETFNSPAMYVAIQAVLSLYASGRTTGIVFDSGDGVSHTVPIYEGYALPHAILRLDLAGRDLTDYLMKILTERGYSFTTTAEREIVRDIKEKLCYVALDFEQEMQTAASSSSLEKSYELPDGQVITIGNERFRCPEALFQPAFLGMESAGIHETCYNSIMKCDVDIRKDLYANTVLSGGSTMFPGIADRMQKEITALAPPTMKIKIIAPPERKYSVCIGGSILASLSTFQQMWISKQEYDESGPSIVHRKCF</sequence>
<proteinExistence type="inferred from homology"/>
<accession>P53473</accession>
<name>ACTB_STRPU</name>
<keyword id="KW-0007">Acetylation</keyword>
<keyword id="KW-0067">ATP-binding</keyword>
<keyword id="KW-0963">Cytoplasm</keyword>
<keyword id="KW-0206">Cytoskeleton</keyword>
<keyword id="KW-0378">Hydrolase</keyword>
<keyword id="KW-0547">Nucleotide-binding</keyword>
<keyword id="KW-1185">Reference proteome</keyword>
<reference key="1">
    <citation type="journal article" date="1983" name="Mol. Cell. Biol.">
        <title>DNA sequence of two linked actin genes of sea urchin.</title>
        <authorList>
            <person name="Schuler M.A."/>
            <person name="McOsker P."/>
            <person name="Keller E.B."/>
        </authorList>
    </citation>
    <scope>NUCLEOTIDE SEQUENCE [GENOMIC DNA]</scope>
</reference>
<reference key="2">
    <citation type="journal article" date="1981" name="Nucleic Acids Res.">
        <title>The chromosomal arrangement of two linked actin genes in the sea urchin S. purpuratus.</title>
        <authorList>
            <person name="Schuler M.A."/>
            <person name="Keller E.B."/>
        </authorList>
    </citation>
    <scope>NUCLEOTIDE SEQUENCE [GENOMIC DNA] OF 68-376</scope>
</reference>
<dbReference type="EC" id="3.6.4.-" evidence="2"/>
<dbReference type="EMBL" id="J01168">
    <property type="protein sequence ID" value="AAA30032.1"/>
    <property type="molecule type" value="Genomic_DNA"/>
</dbReference>
<dbReference type="SMR" id="P53473"/>
<dbReference type="FunCoup" id="P53473">
    <property type="interactions" value="1849"/>
</dbReference>
<dbReference type="STRING" id="7668.P53473"/>
<dbReference type="HOGENOM" id="CLU_027965_0_2_1"/>
<dbReference type="InParanoid" id="P53473"/>
<dbReference type="Proteomes" id="UP000007110">
    <property type="component" value="Unassembled WGS sequence"/>
</dbReference>
<dbReference type="GO" id="GO:0005737">
    <property type="term" value="C:cytoplasm"/>
    <property type="evidence" value="ECO:0007669"/>
    <property type="project" value="UniProtKB-SubCell"/>
</dbReference>
<dbReference type="GO" id="GO:0005856">
    <property type="term" value="C:cytoskeleton"/>
    <property type="evidence" value="ECO:0007669"/>
    <property type="project" value="UniProtKB-SubCell"/>
</dbReference>
<dbReference type="GO" id="GO:0005524">
    <property type="term" value="F:ATP binding"/>
    <property type="evidence" value="ECO:0007669"/>
    <property type="project" value="UniProtKB-KW"/>
</dbReference>
<dbReference type="GO" id="GO:0016787">
    <property type="term" value="F:hydrolase activity"/>
    <property type="evidence" value="ECO:0007669"/>
    <property type="project" value="UniProtKB-KW"/>
</dbReference>
<dbReference type="CDD" id="cd10224">
    <property type="entry name" value="ASKHA_NBD_actin"/>
    <property type="match status" value="1"/>
</dbReference>
<dbReference type="FunFam" id="2.30.36.70:FF:000001">
    <property type="entry name" value="Actin, alpha skeletal muscle"/>
    <property type="match status" value="1"/>
</dbReference>
<dbReference type="FunFam" id="3.30.420.40:FF:000131">
    <property type="entry name" value="Actin, alpha skeletal muscle"/>
    <property type="match status" value="1"/>
</dbReference>
<dbReference type="FunFam" id="3.30.420.40:FF:000291">
    <property type="entry name" value="Actin, alpha skeletal muscle"/>
    <property type="match status" value="1"/>
</dbReference>
<dbReference type="FunFam" id="3.90.640.10:FF:000047">
    <property type="entry name" value="Actin, alpha skeletal muscle"/>
    <property type="match status" value="1"/>
</dbReference>
<dbReference type="FunFam" id="3.30.420.40:FF:000058">
    <property type="entry name" value="Putative actin-related protein 5"/>
    <property type="match status" value="1"/>
</dbReference>
<dbReference type="Gene3D" id="3.30.420.40">
    <property type="match status" value="2"/>
</dbReference>
<dbReference type="Gene3D" id="3.90.640.10">
    <property type="entry name" value="Actin, Chain A, domain 4"/>
    <property type="match status" value="1"/>
</dbReference>
<dbReference type="InterPro" id="IPR004000">
    <property type="entry name" value="Actin"/>
</dbReference>
<dbReference type="InterPro" id="IPR020902">
    <property type="entry name" value="Actin/actin-like_CS"/>
</dbReference>
<dbReference type="InterPro" id="IPR004001">
    <property type="entry name" value="Actin_CS"/>
</dbReference>
<dbReference type="InterPro" id="IPR043129">
    <property type="entry name" value="ATPase_NBD"/>
</dbReference>
<dbReference type="PANTHER" id="PTHR11937">
    <property type="entry name" value="ACTIN"/>
    <property type="match status" value="1"/>
</dbReference>
<dbReference type="Pfam" id="PF00022">
    <property type="entry name" value="Actin"/>
    <property type="match status" value="1"/>
</dbReference>
<dbReference type="PRINTS" id="PR00190">
    <property type="entry name" value="ACTIN"/>
</dbReference>
<dbReference type="SMART" id="SM00268">
    <property type="entry name" value="ACTIN"/>
    <property type="match status" value="1"/>
</dbReference>
<dbReference type="SUPFAM" id="SSF53067">
    <property type="entry name" value="Actin-like ATPase domain"/>
    <property type="match status" value="2"/>
</dbReference>
<dbReference type="PROSITE" id="PS00406">
    <property type="entry name" value="ACTINS_1"/>
    <property type="match status" value="1"/>
</dbReference>
<dbReference type="PROSITE" id="PS00432">
    <property type="entry name" value="ACTINS_2"/>
    <property type="match status" value="1"/>
</dbReference>
<dbReference type="PROSITE" id="PS01132">
    <property type="entry name" value="ACTINS_ACT_LIKE"/>
    <property type="match status" value="1"/>
</dbReference>
<gene>
    <name type="primary">CYIB</name>
</gene>
<evidence type="ECO:0000250" key="1"/>
<evidence type="ECO:0000250" key="2">
    <source>
        <dbReference type="UniProtKB" id="P68137"/>
    </source>
</evidence>
<evidence type="ECO:0000305" key="3"/>
<comment type="function">
    <text>Actins are highly conserved proteins that are involved in various types of cell motility and are ubiquitously expressed in all eukaryotic cells.</text>
</comment>
<comment type="catalytic activity">
    <reaction evidence="2">
        <text>ATP + H2O = ADP + phosphate + H(+)</text>
        <dbReference type="Rhea" id="RHEA:13065"/>
        <dbReference type="ChEBI" id="CHEBI:15377"/>
        <dbReference type="ChEBI" id="CHEBI:15378"/>
        <dbReference type="ChEBI" id="CHEBI:30616"/>
        <dbReference type="ChEBI" id="CHEBI:43474"/>
        <dbReference type="ChEBI" id="CHEBI:456216"/>
    </reaction>
</comment>
<comment type="subcellular location">
    <subcellularLocation>
        <location>Cytoplasm</location>
    </subcellularLocation>
    <subcellularLocation>
        <location>Cytoplasm</location>
        <location>Cytoskeleton</location>
    </subcellularLocation>
</comment>
<comment type="similarity">
    <text evidence="3">Belongs to the actin family.</text>
</comment>
<protein>
    <recommendedName>
        <fullName>Actin, cytoskeletal 1B</fullName>
        <ecNumber evidence="2">3.6.4.-</ecNumber>
    </recommendedName>
    <alternativeName>
        <fullName>Actin, cytoskeletal IB</fullName>
    </alternativeName>
</protein>
<feature type="propeptide" id="PRO_0000000724" description="Removed in mature form" evidence="1">
    <location>
        <begin position="1"/>
        <end position="2"/>
    </location>
</feature>
<feature type="chain" id="PRO_0000000725" description="Actin, cytoskeletal 1B">
    <location>
        <begin position="3"/>
        <end position="376"/>
    </location>
</feature>
<feature type="modified residue" description="N-acetylaspartate" evidence="1">
    <location>
        <position position="3"/>
    </location>
</feature>
<feature type="unsure residue">
    <location>
        <position position="54"/>
    </location>
</feature>
<feature type="unsure residue">
    <location>
        <position position="235"/>
    </location>
</feature>
<feature type="unsure residue">
    <location>
        <position position="236"/>
    </location>
</feature>
<feature type="unsure residue">
    <location>
        <position position="240"/>
    </location>
</feature>
<feature type="unsure residue">
    <location>
        <position position="304"/>
    </location>
</feature>